<feature type="chain" id="PRO_0000101357" description="Uncharacterized protein RP367">
    <location>
        <begin position="1"/>
        <end position="303"/>
    </location>
</feature>
<reference key="1">
    <citation type="journal article" date="1998" name="Nature">
        <title>The genome sequence of Rickettsia prowazekii and the origin of mitochondria.</title>
        <authorList>
            <person name="Andersson S.G.E."/>
            <person name="Zomorodipour A."/>
            <person name="Andersson J.O."/>
            <person name="Sicheritz-Ponten T."/>
            <person name="Alsmark U.C.M."/>
            <person name="Podowski R.M."/>
            <person name="Naeslund A.K."/>
            <person name="Eriksson A.-S."/>
            <person name="Winkler H.H."/>
            <person name="Kurland C.G."/>
        </authorList>
    </citation>
    <scope>NUCLEOTIDE SEQUENCE [LARGE SCALE GENOMIC DNA]</scope>
    <source>
        <strain>Madrid E</strain>
    </source>
</reference>
<gene>
    <name type="ordered locus">RP367</name>
</gene>
<sequence>MFISNIFQKFFSFLFVLLITTLVCADPKKVAVIVPLEHDSMYKIVSGIQEALKDIDVEILVKNAHADPNILLAIINQIKDHDIDLIIPIGTTVSQTTISHIINKPIVCAAAIINGKNLPLVTGVNDEIKITDTISKLPFLENITLIYSSSEKVIPEVEMLKLYAKNNNISLYTAMIQNLNDMPIAVKNAPKNTQSFIILKDHLIVSGINILKQEAFVRRIPLIASDEGSVINGATIAVGVQEKQIGVEAGLMAKKILQGIAPKDIPFSDMKDFTLFINLKSFLKQDILTQENLSVLPFKHKEF</sequence>
<keyword id="KW-1185">Reference proteome</keyword>
<name>Y367_RICPR</name>
<proteinExistence type="predicted"/>
<organism>
    <name type="scientific">Rickettsia prowazekii (strain Madrid E)</name>
    <dbReference type="NCBI Taxonomy" id="272947"/>
    <lineage>
        <taxon>Bacteria</taxon>
        <taxon>Pseudomonadati</taxon>
        <taxon>Pseudomonadota</taxon>
        <taxon>Alphaproteobacteria</taxon>
        <taxon>Rickettsiales</taxon>
        <taxon>Rickettsiaceae</taxon>
        <taxon>Rickettsieae</taxon>
        <taxon>Rickettsia</taxon>
        <taxon>typhus group</taxon>
    </lineage>
</organism>
<dbReference type="EMBL" id="AJ235271">
    <property type="protein sequence ID" value="CAA14826.1"/>
    <property type="molecule type" value="Genomic_DNA"/>
</dbReference>
<dbReference type="PIR" id="H71693">
    <property type="entry name" value="H71693"/>
</dbReference>
<dbReference type="RefSeq" id="NP_220750.1">
    <property type="nucleotide sequence ID" value="NC_000963.1"/>
</dbReference>
<dbReference type="RefSeq" id="WP_004599431.1">
    <property type="nucleotide sequence ID" value="NC_000963.1"/>
</dbReference>
<dbReference type="SMR" id="Q9ZDG2"/>
<dbReference type="STRING" id="272947.gene:17555447"/>
<dbReference type="EnsemblBacteria" id="CAA14826">
    <property type="protein sequence ID" value="CAA14826"/>
    <property type="gene ID" value="CAA14826"/>
</dbReference>
<dbReference type="KEGG" id="rpr:RP367"/>
<dbReference type="PATRIC" id="fig|272947.5.peg.377"/>
<dbReference type="eggNOG" id="COG2984">
    <property type="taxonomic scope" value="Bacteria"/>
</dbReference>
<dbReference type="HOGENOM" id="CLU_865671_0_0_5"/>
<dbReference type="OrthoDB" id="9776955at2"/>
<dbReference type="Proteomes" id="UP000002480">
    <property type="component" value="Chromosome"/>
</dbReference>
<dbReference type="CDD" id="cd06325">
    <property type="entry name" value="PBP1_ABC_unchar_transporter"/>
    <property type="match status" value="1"/>
</dbReference>
<dbReference type="Gene3D" id="3.40.50.2300">
    <property type="match status" value="2"/>
</dbReference>
<dbReference type="InterPro" id="IPR007487">
    <property type="entry name" value="ABC_transpt-TYRBP-like"/>
</dbReference>
<dbReference type="InterPro" id="IPR028082">
    <property type="entry name" value="Peripla_BP_I"/>
</dbReference>
<dbReference type="PANTHER" id="PTHR35271:SF1">
    <property type="entry name" value="ABC TRANSPORTER, SUBSTRATE-BINDING LIPOPROTEIN"/>
    <property type="match status" value="1"/>
</dbReference>
<dbReference type="PANTHER" id="PTHR35271">
    <property type="entry name" value="ABC TRANSPORTER, SUBSTRATE-BINDING LIPOPROTEIN-RELATED"/>
    <property type="match status" value="1"/>
</dbReference>
<dbReference type="Pfam" id="PF04392">
    <property type="entry name" value="ABC_sub_bind"/>
    <property type="match status" value="1"/>
</dbReference>
<dbReference type="SUPFAM" id="SSF53822">
    <property type="entry name" value="Periplasmic binding protein-like I"/>
    <property type="match status" value="1"/>
</dbReference>
<accession>Q9ZDG2</accession>
<protein>
    <recommendedName>
        <fullName>Uncharacterized protein RP367</fullName>
    </recommendedName>
</protein>